<dbReference type="EC" id="6.2.1.13" evidence="2"/>
<dbReference type="EMBL" id="AE009950">
    <property type="protein sequence ID" value="AAL81961.1"/>
    <property type="molecule type" value="Genomic_DNA"/>
</dbReference>
<dbReference type="RefSeq" id="WP_011012977.1">
    <property type="nucleotide sequence ID" value="NZ_CP023154.1"/>
</dbReference>
<dbReference type="SMR" id="Q8TZY8"/>
<dbReference type="STRING" id="186497.PF1837"/>
<dbReference type="PaxDb" id="186497-PF1837"/>
<dbReference type="GeneID" id="41713656"/>
<dbReference type="KEGG" id="pfu:PF1837"/>
<dbReference type="PATRIC" id="fig|186497.12.peg.1908"/>
<dbReference type="eggNOG" id="arCOG01338">
    <property type="taxonomic scope" value="Archaea"/>
</dbReference>
<dbReference type="HOGENOM" id="CLU_063044_1_1_2"/>
<dbReference type="OrthoDB" id="18103at2157"/>
<dbReference type="PhylomeDB" id="Q8TZY8"/>
<dbReference type="SABIO-RK" id="Q8TZY8"/>
<dbReference type="Proteomes" id="UP000001013">
    <property type="component" value="Chromosome"/>
</dbReference>
<dbReference type="GO" id="GO:0043758">
    <property type="term" value="F:acetate-CoA ligase (ADP-forming) activity"/>
    <property type="evidence" value="ECO:0007669"/>
    <property type="project" value="UniProtKB-EC"/>
</dbReference>
<dbReference type="GO" id="GO:0005524">
    <property type="term" value="F:ATP binding"/>
    <property type="evidence" value="ECO:0007669"/>
    <property type="project" value="UniProtKB-KW"/>
</dbReference>
<dbReference type="GO" id="GO:0046872">
    <property type="term" value="F:metal ion binding"/>
    <property type="evidence" value="ECO:0007669"/>
    <property type="project" value="InterPro"/>
</dbReference>
<dbReference type="FunFam" id="3.30.1490.20:FF:000020">
    <property type="entry name" value="Protein lysine acetyltransferase"/>
    <property type="match status" value="1"/>
</dbReference>
<dbReference type="Gene3D" id="3.30.1490.20">
    <property type="entry name" value="ATP-grasp fold, A domain"/>
    <property type="match status" value="1"/>
</dbReference>
<dbReference type="Gene3D" id="3.30.470.20">
    <property type="entry name" value="ATP-grasp fold, B domain"/>
    <property type="match status" value="1"/>
</dbReference>
<dbReference type="InterPro" id="IPR051538">
    <property type="entry name" value="Acyl-CoA_Synth/Transferase"/>
</dbReference>
<dbReference type="InterPro" id="IPR011761">
    <property type="entry name" value="ATP-grasp"/>
</dbReference>
<dbReference type="InterPro" id="IPR013815">
    <property type="entry name" value="ATP_grasp_subdomain_1"/>
</dbReference>
<dbReference type="PANTHER" id="PTHR43334:SF1">
    <property type="entry name" value="3-HYDROXYPROPIONATE--COA LIGASE [ADP-FORMING]"/>
    <property type="match status" value="1"/>
</dbReference>
<dbReference type="PANTHER" id="PTHR43334">
    <property type="entry name" value="ACETATE--COA LIGASE [ADP-FORMING]"/>
    <property type="match status" value="1"/>
</dbReference>
<dbReference type="Pfam" id="PF13549">
    <property type="entry name" value="ATP-grasp_5"/>
    <property type="match status" value="1"/>
</dbReference>
<dbReference type="SUPFAM" id="SSF56059">
    <property type="entry name" value="Glutathione synthetase ATP-binding domain-like"/>
    <property type="match status" value="1"/>
</dbReference>
<dbReference type="PROSITE" id="PS50975">
    <property type="entry name" value="ATP_GRASP"/>
    <property type="match status" value="1"/>
</dbReference>
<feature type="chain" id="PRO_0000430523" description="Acetate--CoA ligase [ADP-forming] II subunit beta">
    <location>
        <begin position="1"/>
        <end position="236"/>
    </location>
</feature>
<feature type="domain" description="ATP-grasp" evidence="1">
    <location>
        <begin position="26"/>
        <end position="62"/>
    </location>
</feature>
<feature type="binding site" evidence="1">
    <location>
        <begin position="52"/>
        <end position="63"/>
    </location>
    <ligand>
        <name>ATP</name>
        <dbReference type="ChEBI" id="CHEBI:30616"/>
    </ligand>
</feature>
<reference key="1">
    <citation type="journal article" date="1999" name="Genetics">
        <title>Divergence of the hyperthermophilic archaea Pyrococcus furiosus and P. horikoshii inferred from complete genomic sequences.</title>
        <authorList>
            <person name="Maeder D.L."/>
            <person name="Weiss R.B."/>
            <person name="Dunn D.M."/>
            <person name="Cherry J.L."/>
            <person name="Gonzalez J.M."/>
            <person name="DiRuggiero J."/>
            <person name="Robb F.T."/>
        </authorList>
    </citation>
    <scope>NUCLEOTIDE SEQUENCE [LARGE SCALE GENOMIC DNA]</scope>
    <source>
        <strain>ATCC 43587 / DSM 3638 / JCM 8422 / Vc1</strain>
    </source>
</reference>
<reference key="2">
    <citation type="journal article" date="1996" name="J. Bacteriol.">
        <title>Purification and characterization of two reversible and ADP-dependent acetyl coenzyme A synthetases from the hyperthermophilic archaeon Pyrococcus furiosus.</title>
        <authorList>
            <person name="Mai X."/>
            <person name="Adams M.W."/>
        </authorList>
    </citation>
    <scope>PROTEIN SEQUENCE OF 1-30</scope>
    <scope>FUNCTION</scope>
    <scope>CATALYTIC ACTIVITY</scope>
    <scope>BIOPHYSICOCHEMICAL PROPERTIES</scope>
    <scope>SUBUNIT</scope>
    <source>
        <strain>ATCC 43587 / DSM 3638 / JCM 8422 / Vc1</strain>
    </source>
</reference>
<reference key="3">
    <citation type="journal article" date="1999" name="J. Bacteriol.">
        <title>Acetyl coenzyme A synthetase (ADP forming) from the hyperthermophilic Archaeon pyrococcus furiosus: identification, cloning, separate expression of the encoding genes, acdAI and acdBI, in Escherichia coli, and in vitro reconstitution of the active heterotetrameric enzyme from its recombinant subunits.</title>
        <authorList>
            <person name="Musfeldt M."/>
            <person name="Selig M."/>
            <person name="Schonheit P."/>
        </authorList>
    </citation>
    <scope>GENE NAME</scope>
</reference>
<keyword id="KW-0067">ATP-binding</keyword>
<keyword id="KW-0903">Direct protein sequencing</keyword>
<keyword id="KW-0436">Ligase</keyword>
<keyword id="KW-0547">Nucleotide-binding</keyword>
<keyword id="KW-1185">Reference proteome</keyword>
<sequence length="236" mass="26444">MKGEALKIIEEVLAQGRTAMVEYEAKQVLKAYGLPVPEEKLAKTLDEALKYAEEIGYPVAMKLMSPQILHKSDAKVVMLNIKSPEELKKKWEEIHENARKYRPDAEIFGVLIAPMLKPGREVIIGVTEDPQFGHAIMFGLGGIFVEILKDVTFRIIPITEKDARKMITEIKAYPILAGARGEEPADIEAIVDMLLKVSKLVDDLKDYIKEMDLNPVFVYRKGEGAVVVDARIILKG</sequence>
<comment type="function">
    <text evidence="2">Catalyzes the reversible formation of acetate and ATP from acetyl-CoA by using ADP and phosphate. Can use other substrates such as phenylacetyl-CoA, indoleacetyl-CoA and isobutyryl-CoA, but not succinyl-CoA. Seems to be involved primarily in the degradation of aryl-CoA esters to the corresponding acids. Participates in the conversion of acetyl-CoA to acetate and in the degradation of branched-chain amino acids via branched-chain-acyl-CoA esters.</text>
</comment>
<comment type="catalytic activity">
    <reaction evidence="2">
        <text>acetate + ATP + CoA = acetyl-CoA + ADP + phosphate</text>
        <dbReference type="Rhea" id="RHEA:15081"/>
        <dbReference type="ChEBI" id="CHEBI:30089"/>
        <dbReference type="ChEBI" id="CHEBI:30616"/>
        <dbReference type="ChEBI" id="CHEBI:43474"/>
        <dbReference type="ChEBI" id="CHEBI:57287"/>
        <dbReference type="ChEBI" id="CHEBI:57288"/>
        <dbReference type="ChEBI" id="CHEBI:456216"/>
        <dbReference type="EC" id="6.2.1.13"/>
    </reaction>
</comment>
<comment type="biophysicochemical properties">
    <kinetics>
        <KM evidence="2">61 uM for ADP (at 80 degrees Celsius)</KM>
        <KM evidence="2">236 uM for GDP (at 80 degrees Celsius)</KM>
        <KM evidence="2">580 uM for phosphate (at 80 degrees Celsius)</KM>
        <KM evidence="2">26 uM for acetyl-CoA (at 80 degrees Celsius)</KM>
        <KM evidence="2">12 uM for isobutyryl-CoA (at 80 degrees Celsius)</KM>
        <KM evidence="2">4 uM for phenylacetyl-CoA (at 80 degrees Celsius)</KM>
        <KM evidence="2">326 uM for ATP (at 80 degrees Celsius)</KM>
        <KM evidence="2">770 uM for GTP (at 80 degrees Celsius)</KM>
        <KM evidence="2">74 uM for CoA (at 80 degrees Celsius)</KM>
        <KM evidence="2">10700 uM for acetate (at 80 degrees Celsius)</KM>
        <KM evidence="2">5800 uM for isobutyrate (at 80 degrees Celsius)</KM>
        <KM evidence="2">2000 uM for indoleacetate (at 80 degrees Celsius)</KM>
        <KM evidence="2">768 uM for phenylacetate (at 80 degrees Celsius)</KM>
        <text evidence="2">kcat is 115 sec(-1) for ADP. kcat is 21 sec(-1) for GDP. kcat is 117 sec(-1) for phosphate. kcat is 42 sec(-1) for acetyl-CoA. kcat is 8 sec(-1) for isobutyryl-CoA. kcat is 138 sec(-1) for phenylacetyl-CoA. kcat is 68 sec(-1) for ATP. kcat is 27 sec(-1) for GTP. kcat is 70 sec(-1) for CoA. kcat is 67 sec(-1) for acetate. kcat is 22 sec(-1) for isobutyrate. kcat is 66 sec(-1) for indoleacetate. kcat is 89 sec(-1) for phenylacetate.</text>
    </kinetics>
    <phDependence>
        <text evidence="2">Optimum pH is 9.0 (at 80 degrees Celsius).</text>
    </phDependence>
    <temperatureDependence>
        <text evidence="2">Optimum temperature is above 90 degrees Celsius (at pH 8.0).</text>
    </temperatureDependence>
</comment>
<comment type="subunit">
    <text evidence="2">Heterotetramer of two alpha and two beta subunits.</text>
</comment>
<comment type="similarity">
    <text evidence="4">Belongs to the acetate CoA ligase beta subunit family.</text>
</comment>
<protein>
    <recommendedName>
        <fullName evidence="4">Acetate--CoA ligase [ADP-forming] II subunit beta</fullName>
        <ecNumber evidence="2">6.2.1.13</ecNumber>
    </recommendedName>
    <alternativeName>
        <fullName evidence="4">ADP-forming acetyl coenzyme A synthetase II subunit beta</fullName>
        <shortName evidence="4">ACS II subunit beta</shortName>
    </alternativeName>
</protein>
<evidence type="ECO:0000255" key="1">
    <source>
        <dbReference type="PROSITE-ProRule" id="PRU00409"/>
    </source>
</evidence>
<evidence type="ECO:0000269" key="2">
    <source>
    </source>
</evidence>
<evidence type="ECO:0000303" key="3">
    <source>
    </source>
</evidence>
<evidence type="ECO:0000305" key="4"/>
<evidence type="ECO:0000312" key="5">
    <source>
        <dbReference type="EMBL" id="AAL81961.1"/>
    </source>
</evidence>
<accession>Q8TZY8</accession>
<name>ACDB2_PYRFU</name>
<organism>
    <name type="scientific">Pyrococcus furiosus (strain ATCC 43587 / DSM 3638 / JCM 8422 / Vc1)</name>
    <dbReference type="NCBI Taxonomy" id="186497"/>
    <lineage>
        <taxon>Archaea</taxon>
        <taxon>Methanobacteriati</taxon>
        <taxon>Methanobacteriota</taxon>
        <taxon>Thermococci</taxon>
        <taxon>Thermococcales</taxon>
        <taxon>Thermococcaceae</taxon>
        <taxon>Pyrococcus</taxon>
    </lineage>
</organism>
<proteinExistence type="evidence at protein level"/>
<gene>
    <name evidence="3" type="primary">acdBII</name>
    <name evidence="5" type="ordered locus">PF1837</name>
</gene>